<organism>
    <name type="scientific">Vaccinia virus (strain Copenhagen)</name>
    <name type="common">VACV</name>
    <dbReference type="NCBI Taxonomy" id="10249"/>
    <lineage>
        <taxon>Viruses</taxon>
        <taxon>Varidnaviria</taxon>
        <taxon>Bamfordvirae</taxon>
        <taxon>Nucleocytoviricota</taxon>
        <taxon>Pokkesviricetes</taxon>
        <taxon>Chitovirales</taxon>
        <taxon>Poxviridae</taxon>
        <taxon>Chordopoxvirinae</taxon>
        <taxon>Orthopoxvirus</taxon>
        <taxon>Vaccinia virus</taxon>
    </lineage>
</organism>
<accession>P68477</accession>
<accession>P20545</accession>
<gene>
    <name type="ORF">B ORF E</name>
</gene>
<protein>
    <recommendedName>
        <fullName>Uncharacterized 10.5 kDa protein</fullName>
    </recommendedName>
</protein>
<reference key="1">
    <citation type="journal article" date="1990" name="Virology">
        <title>The complete DNA sequence of vaccinia virus.</title>
        <authorList>
            <person name="Goebel S.J."/>
            <person name="Johnson G.P."/>
            <person name="Perkus M.E."/>
            <person name="Davis S.W."/>
            <person name="Winslow J.P."/>
            <person name="Paoletti E."/>
        </authorList>
    </citation>
    <scope>NUCLEOTIDE SEQUENCE [LARGE SCALE GENOMIC DNA]</scope>
</reference>
<reference key="2">
    <citation type="journal article" date="1990" name="Virology">
        <title>Appendix to 'The complete DNA sequence of vaccinia virus'.</title>
        <authorList>
            <person name="Goebel S.J."/>
            <person name="Johnson G.P."/>
            <person name="Perkus M.E."/>
            <person name="Davis S.W."/>
            <person name="Winslow J.P."/>
            <person name="Paoletti E."/>
        </authorList>
    </citation>
    <scope>COMPLETE GENOME</scope>
</reference>
<keyword id="KW-1185">Reference proteome</keyword>
<dbReference type="EMBL" id="M35027">
    <property type="protein sequence ID" value="AAA48213.1"/>
    <property type="molecule type" value="Genomic_DNA"/>
</dbReference>
<dbReference type="PIR" id="F42529">
    <property type="entry name" value="F42529"/>
</dbReference>
<dbReference type="SMR" id="P68477"/>
<dbReference type="Proteomes" id="UP000008269">
    <property type="component" value="Segment"/>
</dbReference>
<organismHost>
    <name type="scientific">Homo sapiens</name>
    <name type="common">Human</name>
    <dbReference type="NCBI Taxonomy" id="9606"/>
</organismHost>
<proteinExistence type="predicted"/>
<feature type="chain" id="PRO_0000099673" description="Uncharacterized 10.5 kDa protein">
    <location>
        <begin position="1"/>
        <end position="91"/>
    </location>
</feature>
<name>YVBE_VACCC</name>
<sequence>MYNSSIHTPEYDVIIHVIEHLKHHKQCVQTVTSGMVFTSPVSSSICTKSDDGRNLSDGFLLIRYITTDDFCTIFDIIPRHIFYQLANVDEH</sequence>